<name>UPP_FRATN</name>
<gene>
    <name evidence="1" type="primary">upp</name>
    <name type="ordered locus">FTN_0628</name>
</gene>
<comment type="function">
    <text evidence="1">Catalyzes the conversion of uracil and 5-phospho-alpha-D-ribose 1-diphosphate (PRPP) to UMP and diphosphate.</text>
</comment>
<comment type="catalytic activity">
    <reaction evidence="1">
        <text>UMP + diphosphate = 5-phospho-alpha-D-ribose 1-diphosphate + uracil</text>
        <dbReference type="Rhea" id="RHEA:13017"/>
        <dbReference type="ChEBI" id="CHEBI:17568"/>
        <dbReference type="ChEBI" id="CHEBI:33019"/>
        <dbReference type="ChEBI" id="CHEBI:57865"/>
        <dbReference type="ChEBI" id="CHEBI:58017"/>
        <dbReference type="EC" id="2.4.2.9"/>
    </reaction>
</comment>
<comment type="cofactor">
    <cofactor evidence="1">
        <name>Mg(2+)</name>
        <dbReference type="ChEBI" id="CHEBI:18420"/>
    </cofactor>
    <text evidence="1">Binds 1 Mg(2+) ion per subunit. The magnesium is bound as Mg-PRPP.</text>
</comment>
<comment type="activity regulation">
    <text evidence="1">Allosterically activated by GTP.</text>
</comment>
<comment type="pathway">
    <text evidence="1">Pyrimidine metabolism; UMP biosynthesis via salvage pathway; UMP from uracil: step 1/1.</text>
</comment>
<comment type="similarity">
    <text evidence="1">Belongs to the UPRTase family.</text>
</comment>
<reference key="1">
    <citation type="journal article" date="2007" name="Genome Biol.">
        <title>Comparison of Francisella tularensis genomes reveals evolutionary events associated with the emergence of human pathogenic strains.</title>
        <authorList>
            <person name="Rohmer L."/>
            <person name="Fong C."/>
            <person name="Abmayr S."/>
            <person name="Wasnick M."/>
            <person name="Larson Freeman T.J."/>
            <person name="Radey M."/>
            <person name="Guina T."/>
            <person name="Svensson K."/>
            <person name="Hayden H.S."/>
            <person name="Jacobs M."/>
            <person name="Gallagher L.A."/>
            <person name="Manoil C."/>
            <person name="Ernst R.K."/>
            <person name="Drees B."/>
            <person name="Buckley D."/>
            <person name="Haugen E."/>
            <person name="Bovee D."/>
            <person name="Zhou Y."/>
            <person name="Chang J."/>
            <person name="Levy R."/>
            <person name="Lim R."/>
            <person name="Gillett W."/>
            <person name="Guenthener D."/>
            <person name="Kang A."/>
            <person name="Shaffer S.A."/>
            <person name="Taylor G."/>
            <person name="Chen J."/>
            <person name="Gallis B."/>
            <person name="D'Argenio D.A."/>
            <person name="Forsman M."/>
            <person name="Olson M.V."/>
            <person name="Goodlett D.R."/>
            <person name="Kaul R."/>
            <person name="Miller S.I."/>
            <person name="Brittnacher M.J."/>
        </authorList>
    </citation>
    <scope>NUCLEOTIDE SEQUENCE [LARGE SCALE GENOMIC DNA]</scope>
    <source>
        <strain>U112</strain>
    </source>
</reference>
<accession>A0Q5K6</accession>
<feature type="chain" id="PRO_1000053719" description="Uracil phosphoribosyltransferase">
    <location>
        <begin position="1"/>
        <end position="209"/>
    </location>
</feature>
<feature type="binding site" evidence="1">
    <location>
        <position position="79"/>
    </location>
    <ligand>
        <name>5-phospho-alpha-D-ribose 1-diphosphate</name>
        <dbReference type="ChEBI" id="CHEBI:58017"/>
    </ligand>
</feature>
<feature type="binding site" evidence="1">
    <location>
        <position position="104"/>
    </location>
    <ligand>
        <name>5-phospho-alpha-D-ribose 1-diphosphate</name>
        <dbReference type="ChEBI" id="CHEBI:58017"/>
    </ligand>
</feature>
<feature type="binding site" evidence="1">
    <location>
        <begin position="131"/>
        <end position="139"/>
    </location>
    <ligand>
        <name>5-phospho-alpha-D-ribose 1-diphosphate</name>
        <dbReference type="ChEBI" id="CHEBI:58017"/>
    </ligand>
</feature>
<feature type="binding site" evidence="1">
    <location>
        <position position="194"/>
    </location>
    <ligand>
        <name>uracil</name>
        <dbReference type="ChEBI" id="CHEBI:17568"/>
    </ligand>
</feature>
<feature type="binding site" evidence="1">
    <location>
        <begin position="199"/>
        <end position="201"/>
    </location>
    <ligand>
        <name>uracil</name>
        <dbReference type="ChEBI" id="CHEBI:17568"/>
    </ligand>
</feature>
<feature type="binding site" evidence="1">
    <location>
        <position position="200"/>
    </location>
    <ligand>
        <name>5-phospho-alpha-D-ribose 1-diphosphate</name>
        <dbReference type="ChEBI" id="CHEBI:58017"/>
    </ligand>
</feature>
<protein>
    <recommendedName>
        <fullName evidence="1">Uracil phosphoribosyltransferase</fullName>
        <ecNumber evidence="1">2.4.2.9</ecNumber>
    </recommendedName>
    <alternativeName>
        <fullName evidence="1">UMP pyrophosphorylase</fullName>
    </alternativeName>
    <alternativeName>
        <fullName evidence="1">UPRTase</fullName>
    </alternativeName>
</protein>
<keyword id="KW-0021">Allosteric enzyme</keyword>
<keyword id="KW-0328">Glycosyltransferase</keyword>
<keyword id="KW-0342">GTP-binding</keyword>
<keyword id="KW-0460">Magnesium</keyword>
<keyword id="KW-0547">Nucleotide-binding</keyword>
<keyword id="KW-0808">Transferase</keyword>
<sequence length="209" mass="22768">MKVVEISHPMVKHKLGLMRAASISTQEFRRLTKEITSLLTYEVTAGFELEKTEILGWQGENIEIDQIKGKKLTVVPILRAGLGMMDGVFEHVPAAKVSMVGMYRDEKTAKPVAYFAKLCDKLDERVALIVDPMLATGGSMIATVSLLKKAGSKDIKIITLVSAPEGIDALAKAHPDVELYTASIDSHLNDKKYIIPGLGDAGDKIFGTK</sequence>
<proteinExistence type="inferred from homology"/>
<evidence type="ECO:0000255" key="1">
    <source>
        <dbReference type="HAMAP-Rule" id="MF_01218"/>
    </source>
</evidence>
<dbReference type="EC" id="2.4.2.9" evidence="1"/>
<dbReference type="EMBL" id="CP000439">
    <property type="protein sequence ID" value="ABK89521.1"/>
    <property type="molecule type" value="Genomic_DNA"/>
</dbReference>
<dbReference type="RefSeq" id="WP_003026826.1">
    <property type="nucleotide sequence ID" value="NZ_CP009633.1"/>
</dbReference>
<dbReference type="SMR" id="A0Q5K6"/>
<dbReference type="KEGG" id="ftn:FTN_0628"/>
<dbReference type="KEGG" id="ftx:AW25_1398"/>
<dbReference type="UniPathway" id="UPA00574">
    <property type="reaction ID" value="UER00636"/>
</dbReference>
<dbReference type="Proteomes" id="UP000000762">
    <property type="component" value="Chromosome"/>
</dbReference>
<dbReference type="GO" id="GO:0005525">
    <property type="term" value="F:GTP binding"/>
    <property type="evidence" value="ECO:0007669"/>
    <property type="project" value="UniProtKB-KW"/>
</dbReference>
<dbReference type="GO" id="GO:0000287">
    <property type="term" value="F:magnesium ion binding"/>
    <property type="evidence" value="ECO:0007669"/>
    <property type="project" value="UniProtKB-UniRule"/>
</dbReference>
<dbReference type="GO" id="GO:0004845">
    <property type="term" value="F:uracil phosphoribosyltransferase activity"/>
    <property type="evidence" value="ECO:0007669"/>
    <property type="project" value="UniProtKB-UniRule"/>
</dbReference>
<dbReference type="GO" id="GO:0044206">
    <property type="term" value="P:UMP salvage"/>
    <property type="evidence" value="ECO:0007669"/>
    <property type="project" value="UniProtKB-UniRule"/>
</dbReference>
<dbReference type="GO" id="GO:0006223">
    <property type="term" value="P:uracil salvage"/>
    <property type="evidence" value="ECO:0007669"/>
    <property type="project" value="InterPro"/>
</dbReference>
<dbReference type="CDD" id="cd06223">
    <property type="entry name" value="PRTases_typeI"/>
    <property type="match status" value="1"/>
</dbReference>
<dbReference type="FunFam" id="3.40.50.2020:FF:000003">
    <property type="entry name" value="Uracil phosphoribosyltransferase"/>
    <property type="match status" value="1"/>
</dbReference>
<dbReference type="Gene3D" id="3.40.50.2020">
    <property type="match status" value="1"/>
</dbReference>
<dbReference type="HAMAP" id="MF_01218_B">
    <property type="entry name" value="Upp_B"/>
    <property type="match status" value="1"/>
</dbReference>
<dbReference type="InterPro" id="IPR000836">
    <property type="entry name" value="PRibTrfase_dom"/>
</dbReference>
<dbReference type="InterPro" id="IPR029057">
    <property type="entry name" value="PRTase-like"/>
</dbReference>
<dbReference type="InterPro" id="IPR034332">
    <property type="entry name" value="Upp_B"/>
</dbReference>
<dbReference type="InterPro" id="IPR050054">
    <property type="entry name" value="UPRTase/APRTase"/>
</dbReference>
<dbReference type="InterPro" id="IPR005765">
    <property type="entry name" value="Ura_phspho_trans"/>
</dbReference>
<dbReference type="NCBIfam" id="NF001097">
    <property type="entry name" value="PRK00129.1"/>
    <property type="match status" value="1"/>
</dbReference>
<dbReference type="NCBIfam" id="TIGR01091">
    <property type="entry name" value="upp"/>
    <property type="match status" value="1"/>
</dbReference>
<dbReference type="PANTHER" id="PTHR32315">
    <property type="entry name" value="ADENINE PHOSPHORIBOSYLTRANSFERASE"/>
    <property type="match status" value="1"/>
</dbReference>
<dbReference type="PANTHER" id="PTHR32315:SF4">
    <property type="entry name" value="URACIL PHOSPHORIBOSYLTRANSFERASE, CHLOROPLASTIC"/>
    <property type="match status" value="1"/>
</dbReference>
<dbReference type="Pfam" id="PF14681">
    <property type="entry name" value="UPRTase"/>
    <property type="match status" value="1"/>
</dbReference>
<dbReference type="SUPFAM" id="SSF53271">
    <property type="entry name" value="PRTase-like"/>
    <property type="match status" value="1"/>
</dbReference>
<organism>
    <name type="scientific">Francisella tularensis subsp. novicida (strain U112)</name>
    <dbReference type="NCBI Taxonomy" id="401614"/>
    <lineage>
        <taxon>Bacteria</taxon>
        <taxon>Pseudomonadati</taxon>
        <taxon>Pseudomonadota</taxon>
        <taxon>Gammaproteobacteria</taxon>
        <taxon>Thiotrichales</taxon>
        <taxon>Francisellaceae</taxon>
        <taxon>Francisella</taxon>
    </lineage>
</organism>